<reference key="1">
    <citation type="journal article" date="2013" name="Plant Physiol.">
        <title>A Nostoc punctiforme Sugar Transporter Necessary to Establish a Cyanobacterium-Plant Symbiosis.</title>
        <authorList>
            <person name="Ekman M."/>
            <person name="Picossi S."/>
            <person name="Campbell E.L."/>
            <person name="Meeks J.C."/>
            <person name="Flores E."/>
        </authorList>
    </citation>
    <scope>NUCLEOTIDE SEQUENCE [LARGE SCALE GENOMIC DNA]</scope>
    <source>
        <strain>ATCC 29133 / PCC 73102</strain>
    </source>
</reference>
<feature type="chain" id="PRO_1000095155" description="Glutamyl-tRNA(Gln) amidotransferase subunit A">
    <location>
        <begin position="1"/>
        <end position="486"/>
    </location>
</feature>
<feature type="active site" description="Charge relay system" evidence="1">
    <location>
        <position position="75"/>
    </location>
</feature>
<feature type="active site" description="Charge relay system" evidence="1">
    <location>
        <position position="150"/>
    </location>
</feature>
<feature type="active site" description="Acyl-ester intermediate" evidence="1">
    <location>
        <position position="174"/>
    </location>
</feature>
<accession>B2IYD7</accession>
<protein>
    <recommendedName>
        <fullName evidence="1">Glutamyl-tRNA(Gln) amidotransferase subunit A</fullName>
        <shortName evidence="1">Glu-ADT subunit A</shortName>
        <ecNumber evidence="1">6.3.5.7</ecNumber>
    </recommendedName>
</protein>
<comment type="function">
    <text evidence="1">Allows the formation of correctly charged Gln-tRNA(Gln) through the transamidation of misacylated Glu-tRNA(Gln) in organisms which lack glutaminyl-tRNA synthetase. The reaction takes place in the presence of glutamine and ATP through an activated gamma-phospho-Glu-tRNA(Gln).</text>
</comment>
<comment type="catalytic activity">
    <reaction evidence="1">
        <text>L-glutamyl-tRNA(Gln) + L-glutamine + ATP + H2O = L-glutaminyl-tRNA(Gln) + L-glutamate + ADP + phosphate + H(+)</text>
        <dbReference type="Rhea" id="RHEA:17521"/>
        <dbReference type="Rhea" id="RHEA-COMP:9681"/>
        <dbReference type="Rhea" id="RHEA-COMP:9684"/>
        <dbReference type="ChEBI" id="CHEBI:15377"/>
        <dbReference type="ChEBI" id="CHEBI:15378"/>
        <dbReference type="ChEBI" id="CHEBI:29985"/>
        <dbReference type="ChEBI" id="CHEBI:30616"/>
        <dbReference type="ChEBI" id="CHEBI:43474"/>
        <dbReference type="ChEBI" id="CHEBI:58359"/>
        <dbReference type="ChEBI" id="CHEBI:78520"/>
        <dbReference type="ChEBI" id="CHEBI:78521"/>
        <dbReference type="ChEBI" id="CHEBI:456216"/>
        <dbReference type="EC" id="6.3.5.7"/>
    </reaction>
</comment>
<comment type="subunit">
    <text evidence="1">Heterotrimer of A, B and C subunits.</text>
</comment>
<comment type="similarity">
    <text evidence="1">Belongs to the amidase family. GatA subfamily.</text>
</comment>
<organism>
    <name type="scientific">Nostoc punctiforme (strain ATCC 29133 / PCC 73102)</name>
    <dbReference type="NCBI Taxonomy" id="63737"/>
    <lineage>
        <taxon>Bacteria</taxon>
        <taxon>Bacillati</taxon>
        <taxon>Cyanobacteriota</taxon>
        <taxon>Cyanophyceae</taxon>
        <taxon>Nostocales</taxon>
        <taxon>Nostocaceae</taxon>
        <taxon>Nostoc</taxon>
    </lineage>
</organism>
<evidence type="ECO:0000255" key="1">
    <source>
        <dbReference type="HAMAP-Rule" id="MF_00120"/>
    </source>
</evidence>
<sequence length="486" mass="52192">MASIRELHQQLVKKERSAVEITQEALERIEALEPKLHSFLCVTAERALEQAGAVDAKIAAGEEIGLLAGIPVGIKDNLCTKGIPTTCASRILENFVPPYESTATQKLADAGAVMVGKTNLDEFAMGSSTENSAYQVTANPWNLSRVPGGSSGGSAAAVSSQECVVALGSDTGGSIRQPASFCGVVGMKPTYGLVSRYGLVAYASSLDQIGPFANTVEDAAILLNAIAGHDPKDSTSLKVAIPNYAASFKPDFKPRGQLRIGIVKETFGEGLDSVVEQAVTKAVDVLQSLGAEIHIISCPRFRYGLPTYYIIAPSEASANLARYDGVKYGYRAPDADNLLSMYTRTRATGFGTEVKRRIMIGTYALSAGYYDAYYLKAQKVRTLIKEDFEKAFRVVDVLVCPTSPTTAFKAGEKTTDPLSMYLTDLMTIPVNLAGLPSLSLPCGFDDQGLPIGLQLIGNVLREDQLFQVAYAYEQATTWHLRKPQIS</sequence>
<dbReference type="EC" id="6.3.5.7" evidence="1"/>
<dbReference type="EMBL" id="CP001037">
    <property type="protein sequence ID" value="ACC80024.1"/>
    <property type="molecule type" value="Genomic_DNA"/>
</dbReference>
<dbReference type="RefSeq" id="WP_012408045.1">
    <property type="nucleotide sequence ID" value="NC_010628.1"/>
</dbReference>
<dbReference type="SMR" id="B2IYD7"/>
<dbReference type="STRING" id="63737.Npun_R1308"/>
<dbReference type="EnsemblBacteria" id="ACC80024">
    <property type="protein sequence ID" value="ACC80024"/>
    <property type="gene ID" value="Npun_R1308"/>
</dbReference>
<dbReference type="KEGG" id="npu:Npun_R1308"/>
<dbReference type="eggNOG" id="COG0154">
    <property type="taxonomic scope" value="Bacteria"/>
</dbReference>
<dbReference type="HOGENOM" id="CLU_009600_0_3_3"/>
<dbReference type="OrthoDB" id="9811471at2"/>
<dbReference type="PhylomeDB" id="B2IYD7"/>
<dbReference type="Proteomes" id="UP000001191">
    <property type="component" value="Chromosome"/>
</dbReference>
<dbReference type="GO" id="GO:0030956">
    <property type="term" value="C:glutamyl-tRNA(Gln) amidotransferase complex"/>
    <property type="evidence" value="ECO:0007669"/>
    <property type="project" value="InterPro"/>
</dbReference>
<dbReference type="GO" id="GO:0005524">
    <property type="term" value="F:ATP binding"/>
    <property type="evidence" value="ECO:0007669"/>
    <property type="project" value="UniProtKB-KW"/>
</dbReference>
<dbReference type="GO" id="GO:0050567">
    <property type="term" value="F:glutaminyl-tRNA synthase (glutamine-hydrolyzing) activity"/>
    <property type="evidence" value="ECO:0007669"/>
    <property type="project" value="UniProtKB-UniRule"/>
</dbReference>
<dbReference type="GO" id="GO:0006412">
    <property type="term" value="P:translation"/>
    <property type="evidence" value="ECO:0007669"/>
    <property type="project" value="UniProtKB-UniRule"/>
</dbReference>
<dbReference type="Gene3D" id="3.90.1300.10">
    <property type="entry name" value="Amidase signature (AS) domain"/>
    <property type="match status" value="1"/>
</dbReference>
<dbReference type="HAMAP" id="MF_00120">
    <property type="entry name" value="GatA"/>
    <property type="match status" value="1"/>
</dbReference>
<dbReference type="InterPro" id="IPR000120">
    <property type="entry name" value="Amidase"/>
</dbReference>
<dbReference type="InterPro" id="IPR020556">
    <property type="entry name" value="Amidase_CS"/>
</dbReference>
<dbReference type="InterPro" id="IPR023631">
    <property type="entry name" value="Amidase_dom"/>
</dbReference>
<dbReference type="InterPro" id="IPR036928">
    <property type="entry name" value="AS_sf"/>
</dbReference>
<dbReference type="InterPro" id="IPR004412">
    <property type="entry name" value="GatA"/>
</dbReference>
<dbReference type="NCBIfam" id="TIGR00132">
    <property type="entry name" value="gatA"/>
    <property type="match status" value="1"/>
</dbReference>
<dbReference type="PANTHER" id="PTHR11895:SF151">
    <property type="entry name" value="GLUTAMYL-TRNA(GLN) AMIDOTRANSFERASE SUBUNIT A"/>
    <property type="match status" value="1"/>
</dbReference>
<dbReference type="PANTHER" id="PTHR11895">
    <property type="entry name" value="TRANSAMIDASE"/>
    <property type="match status" value="1"/>
</dbReference>
<dbReference type="Pfam" id="PF01425">
    <property type="entry name" value="Amidase"/>
    <property type="match status" value="1"/>
</dbReference>
<dbReference type="SUPFAM" id="SSF75304">
    <property type="entry name" value="Amidase signature (AS) enzymes"/>
    <property type="match status" value="1"/>
</dbReference>
<dbReference type="PROSITE" id="PS00571">
    <property type="entry name" value="AMIDASES"/>
    <property type="match status" value="1"/>
</dbReference>
<gene>
    <name evidence="1" type="primary">gatA</name>
    <name type="ordered locus">Npun_R1308</name>
</gene>
<proteinExistence type="inferred from homology"/>
<keyword id="KW-0067">ATP-binding</keyword>
<keyword id="KW-0436">Ligase</keyword>
<keyword id="KW-0547">Nucleotide-binding</keyword>
<keyword id="KW-0648">Protein biosynthesis</keyword>
<keyword id="KW-1185">Reference proteome</keyword>
<name>GATA_NOSP7</name>